<gene>
    <name evidence="5" type="primary">CYP205</name>
    <name evidence="5" type="synonym">CYP5139D3v2</name>
</gene>
<sequence>MTVTAVNVLISLGVAALAVAVWKAIVMVIQIATSPLRNIPGPPNSNWVYGNLKEIFATENSVLHEGWVAKYGNTIKYKGWLSRNRLFTVDTRALNYILSHSNEYQKPALARYNLGEVLGEGLLIVEGEQHRQQRRIMNPAFGPAQIRELTEIFVEKAQKLCLFWRNEISKSGEPARIDVLNGLSKMTLDVIGLAGFNYEFDSLNIDGKPNELNQAFSVMFRSLEGFAIVFPLLKALIPPLRLIPDGRSRRIAKARKVMRRMGMELITKKKAEILRAAAGEKEKDNLQSRDLLTLLIKANLATDLPESHRLSDEDVLAQVPTFLVAGHETTSNATAWCLYALTQAPEVQQKLREELWSIPTENPSMDELNELPYLEAVVRETMRVHAPVPSTIRVAMTDDVIPLDTPFVDVHGQVQDSIRVKKGDPIFIPILVINRSKALWGEDAFEFKPERWESVPDAVQHIPGVWANQMSFLGGPRACIGYRFSLIEMKALIFALVRAFEFELAVPPEEIMKKSTAVQRPLVRSEMDKGCQLPLLIKPYHTV</sequence>
<reference key="1">
    <citation type="journal article" date="2012" name="Arch. Microbiol.">
        <title>Molecular identification and functional characterization of cytochrome P450 monooxygenases from the brown-rot basidiomycete Postia placenta.</title>
        <authorList>
            <person name="Ide M."/>
            <person name="Ichinose H."/>
            <person name="Wariishi H."/>
        </authorList>
    </citation>
    <scope>NUCLEOTIDE SEQUENCE [MRNA]</scope>
    <scope>IDENTIFICATION</scope>
    <scope>FUNCTION</scope>
    <scope>CATALYTIC ACTIVITY</scope>
    <source>
        <strain>ATCC 44394 / Madison 698-R</strain>
    </source>
</reference>
<accession>F1SYH0</accession>
<feature type="chain" id="PRO_0000451373" description="Cytochrome P450 monooxygenase 205">
    <location>
        <begin position="1"/>
        <end position="543"/>
    </location>
</feature>
<feature type="transmembrane region" description="Helical" evidence="2">
    <location>
        <begin position="9"/>
        <end position="29"/>
    </location>
</feature>
<feature type="binding site" description="axial binding residue" evidence="1">
    <location>
        <position position="479"/>
    </location>
    <ligand>
        <name>heme</name>
        <dbReference type="ChEBI" id="CHEBI:30413"/>
    </ligand>
    <ligandPart>
        <name>Fe</name>
        <dbReference type="ChEBI" id="CHEBI:18248"/>
    </ligandPart>
</feature>
<feature type="glycosylation site" description="N-linked (GlcNAc...) asparagine" evidence="3">
    <location>
        <position position="332"/>
    </location>
</feature>
<feature type="glycosylation site" description="N-linked (GlcNAc...) asparagine" evidence="3">
    <location>
        <position position="434"/>
    </location>
</feature>
<comment type="function">
    <text evidence="4">Cytochrome P450 monooxygenase that is able to use carbazole and phenanthrene as substrates for oxidation.</text>
</comment>
<comment type="cofactor">
    <cofactor evidence="1">
        <name>heme</name>
        <dbReference type="ChEBI" id="CHEBI:30413"/>
    </cofactor>
</comment>
<comment type="pathway">
    <text evidence="6">Secondary metabolite biosynthesis.</text>
</comment>
<comment type="subcellular location">
    <subcellularLocation>
        <location evidence="2">Membrane</location>
        <topology evidence="2">Single-pass membrane protein</topology>
    </subcellularLocation>
</comment>
<comment type="similarity">
    <text evidence="6">Belongs to the cytochrome P450 family.</text>
</comment>
<dbReference type="EC" id="1.-.-.-" evidence="4"/>
<dbReference type="EMBL" id="AB573381">
    <property type="protein sequence ID" value="BAK09514.1"/>
    <property type="molecule type" value="mRNA"/>
</dbReference>
<dbReference type="SMR" id="F1SYH0"/>
<dbReference type="GlyCosmos" id="F1SYH0">
    <property type="glycosylation" value="2 sites, No reported glycans"/>
</dbReference>
<dbReference type="GO" id="GO:0016020">
    <property type="term" value="C:membrane"/>
    <property type="evidence" value="ECO:0007669"/>
    <property type="project" value="UniProtKB-SubCell"/>
</dbReference>
<dbReference type="GO" id="GO:0020037">
    <property type="term" value="F:heme binding"/>
    <property type="evidence" value="ECO:0007669"/>
    <property type="project" value="InterPro"/>
</dbReference>
<dbReference type="GO" id="GO:0005506">
    <property type="term" value="F:iron ion binding"/>
    <property type="evidence" value="ECO:0007669"/>
    <property type="project" value="InterPro"/>
</dbReference>
<dbReference type="GO" id="GO:0004497">
    <property type="term" value="F:monooxygenase activity"/>
    <property type="evidence" value="ECO:0007669"/>
    <property type="project" value="UniProtKB-KW"/>
</dbReference>
<dbReference type="GO" id="GO:0016705">
    <property type="term" value="F:oxidoreductase activity, acting on paired donors, with incorporation or reduction of molecular oxygen"/>
    <property type="evidence" value="ECO:0007669"/>
    <property type="project" value="InterPro"/>
</dbReference>
<dbReference type="CDD" id="cd11069">
    <property type="entry name" value="CYP_FUM15-like"/>
    <property type="match status" value="1"/>
</dbReference>
<dbReference type="Gene3D" id="1.10.630.10">
    <property type="entry name" value="Cytochrome P450"/>
    <property type="match status" value="1"/>
</dbReference>
<dbReference type="InterPro" id="IPR001128">
    <property type="entry name" value="Cyt_P450"/>
</dbReference>
<dbReference type="InterPro" id="IPR002403">
    <property type="entry name" value="Cyt_P450_E_grp-IV"/>
</dbReference>
<dbReference type="InterPro" id="IPR036396">
    <property type="entry name" value="Cyt_P450_sf"/>
</dbReference>
<dbReference type="InterPro" id="IPR050121">
    <property type="entry name" value="Cytochrome_P450_monoxygenase"/>
</dbReference>
<dbReference type="PANTHER" id="PTHR24305">
    <property type="entry name" value="CYTOCHROME P450"/>
    <property type="match status" value="1"/>
</dbReference>
<dbReference type="PANTHER" id="PTHR24305:SF166">
    <property type="entry name" value="CYTOCHROME P450 12A4, MITOCHONDRIAL-RELATED"/>
    <property type="match status" value="1"/>
</dbReference>
<dbReference type="Pfam" id="PF00067">
    <property type="entry name" value="p450"/>
    <property type="match status" value="1"/>
</dbReference>
<dbReference type="PRINTS" id="PR00465">
    <property type="entry name" value="EP450IV"/>
</dbReference>
<dbReference type="PRINTS" id="PR00385">
    <property type="entry name" value="P450"/>
</dbReference>
<dbReference type="SUPFAM" id="SSF48264">
    <property type="entry name" value="Cytochrome P450"/>
    <property type="match status" value="1"/>
</dbReference>
<organism>
    <name type="scientific">Postia placenta (strain ATCC 44394 / Madison 698-R)</name>
    <name type="common">Brown rot fungus</name>
    <name type="synonym">Poria monticola</name>
    <dbReference type="NCBI Taxonomy" id="561896"/>
    <lineage>
        <taxon>Eukaryota</taxon>
        <taxon>Fungi</taxon>
        <taxon>Dikarya</taxon>
        <taxon>Basidiomycota</taxon>
        <taxon>Agaricomycotina</taxon>
        <taxon>Agaricomycetes</taxon>
        <taxon>Polyporales</taxon>
        <taxon>Adustoporiaceae</taxon>
        <taxon>Rhodonia</taxon>
    </lineage>
</organism>
<name>CY205_POSPM</name>
<evidence type="ECO:0000250" key="1">
    <source>
        <dbReference type="UniProtKB" id="P04798"/>
    </source>
</evidence>
<evidence type="ECO:0000255" key="2"/>
<evidence type="ECO:0000255" key="3">
    <source>
        <dbReference type="PROSITE-ProRule" id="PRU00498"/>
    </source>
</evidence>
<evidence type="ECO:0000269" key="4">
    <source>
    </source>
</evidence>
<evidence type="ECO:0000303" key="5">
    <source>
    </source>
</evidence>
<evidence type="ECO:0000305" key="6"/>
<protein>
    <recommendedName>
        <fullName evidence="5">Cytochrome P450 monooxygenase 205</fullName>
        <ecNumber evidence="4">1.-.-.-</ecNumber>
    </recommendedName>
</protein>
<keyword id="KW-0325">Glycoprotein</keyword>
<keyword id="KW-0349">Heme</keyword>
<keyword id="KW-0408">Iron</keyword>
<keyword id="KW-0472">Membrane</keyword>
<keyword id="KW-0479">Metal-binding</keyword>
<keyword id="KW-0503">Monooxygenase</keyword>
<keyword id="KW-0560">Oxidoreductase</keyword>
<keyword id="KW-0812">Transmembrane</keyword>
<keyword id="KW-1133">Transmembrane helix</keyword>
<proteinExistence type="evidence at protein level"/>